<sequence length="427" mass="47809">MMGKLPLGVVSPYVKMSSGGCSDPLKFYATSYCTAYGREEFKPRLGSHVGTGYKSNYRPLVSYQPHLDTLDNPAIGQQIRDTSKSVTSQSYSPLEVPDGKQPLPWNLHQTTSSYGREKLNPGPHSKEVRKVHFDTQDHGPQTITGLEPKEVPLIHQQQGKGSTEWENSHYGPRFMTSEYNSKYIKESPNHPDLLLKKTIGSKEETGFTEESTKNPIVFQPPSQAFPGDPVLHPGRSITKSDYLPVTHPQGSDFLPVLSRGSDRDTGFSRVNERTLNPRVPTPAPQPASMSHRSYQPPQRMQQTNVALLGRESVGNKEPTGFTLNNPSYVRSSYEQDRDQRYLTTYNQGYFENIPKGLDREGWTRGGIQPQKAGAYALSELNNHTLMDSTPNPTETLRHLHPHVGRTLASVDPFYRDMPHSSRYPASS</sequence>
<organism>
    <name type="scientific">Mus musculus</name>
    <name type="common">Mouse</name>
    <dbReference type="NCBI Taxonomy" id="10090"/>
    <lineage>
        <taxon>Eukaryota</taxon>
        <taxon>Metazoa</taxon>
        <taxon>Chordata</taxon>
        <taxon>Craniata</taxon>
        <taxon>Vertebrata</taxon>
        <taxon>Euteleostomi</taxon>
        <taxon>Mammalia</taxon>
        <taxon>Eutheria</taxon>
        <taxon>Euarchontoglires</taxon>
        <taxon>Glires</taxon>
        <taxon>Rodentia</taxon>
        <taxon>Myomorpha</taxon>
        <taxon>Muroidea</taxon>
        <taxon>Muridae</taxon>
        <taxon>Murinae</taxon>
        <taxon>Mus</taxon>
        <taxon>Mus</taxon>
    </lineage>
</organism>
<gene>
    <name evidence="2" type="primary">Saxo4</name>
    <name evidence="6" type="synonym">Ppp1r32</name>
</gene>
<reference key="1">
    <citation type="journal article" date="2002" name="Gene Expr. Patterns">
        <title>A novel mRNA expressed along brain ventricles.</title>
        <authorList>
            <person name="Danielson P.E."/>
            <person name="Sautkulis L.N."/>
            <person name="Foye P.E."/>
            <person name="Hedlund P.B."/>
            <person name="Carson M.J."/>
        </authorList>
    </citation>
    <scope>NUCLEOTIDE SEQUENCE [MRNA]</scope>
    <source>
        <strain>C57BL/6J</strain>
        <tissue>Brain</tissue>
    </source>
</reference>
<reference key="2">
    <citation type="journal article" date="2004" name="Genome Res.">
        <title>The status, quality, and expansion of the NIH full-length cDNA project: the Mammalian Gene Collection (MGC).</title>
        <authorList>
            <consortium name="The MGC Project Team"/>
        </authorList>
    </citation>
    <scope>NUCLEOTIDE SEQUENCE [LARGE SCALE MRNA]</scope>
</reference>
<reference key="3">
    <citation type="journal article" date="2010" name="Cell">
        <title>A tissue-specific atlas of mouse protein phosphorylation and expression.</title>
        <authorList>
            <person name="Huttlin E.L."/>
            <person name="Jedrychowski M.P."/>
            <person name="Elias J.E."/>
            <person name="Goswami T."/>
            <person name="Rad R."/>
            <person name="Beausoleil S.A."/>
            <person name="Villen J."/>
            <person name="Haas W."/>
            <person name="Sowa M.E."/>
            <person name="Gygi S.P."/>
        </authorList>
    </citation>
    <scope>IDENTIFICATION BY MASS SPECTROMETRY [LARGE SCALE ANALYSIS]</scope>
    <source>
        <tissue>Testis</tissue>
    </source>
</reference>
<reference evidence="7" key="4">
    <citation type="journal article" date="2023" name="Cell">
        <title>Structures of sperm flagellar doublet microtubules expand the genetic spectrum of male infertility.</title>
        <authorList>
            <person name="Zhou L."/>
            <person name="Liu H."/>
            <person name="Liu S."/>
            <person name="Yang X."/>
            <person name="Dong Y."/>
            <person name="Pan Y."/>
            <person name="Xiao Z."/>
            <person name="Zheng B."/>
            <person name="Sun Y."/>
            <person name="Huang P."/>
            <person name="Zhang X."/>
            <person name="Hu J."/>
            <person name="Sun R."/>
            <person name="Feng S."/>
            <person name="Zhu Y."/>
            <person name="Liu M."/>
            <person name="Gui M."/>
            <person name="Wu J."/>
        </authorList>
    </citation>
    <scope>STRUCTURE BY ELECTRON MICROSCOPY (3.50 ANGSTROMS) OF SPERM FLAGELLAR DOUBLET MICROTUBULES</scope>
    <scope>SUBCELLULAR LOCATION</scope>
    <scope>SUBUNIT</scope>
</reference>
<comment type="subunit">
    <text evidence="2 4">Microtubule inner protein component of sperm flagellar doublet microtubules (PubMed:37295417). Interacts with PPP1CA (By similarity).</text>
</comment>
<comment type="subcellular location">
    <subcellularLocation>
        <location evidence="1">Cell projection</location>
        <location evidence="1">Cilium</location>
    </subcellularLocation>
    <subcellularLocation>
        <location evidence="1">Cytoplasm</location>
    </subcellularLocation>
    <subcellularLocation>
        <location evidence="4">Cytoplasm</location>
        <location evidence="4">Cytoskeleton</location>
        <location evidence="4">Flagellum axoneme</location>
    </subcellularLocation>
    <text evidence="1">Localized to the cilia of polarized ependymal cells during development and at the adult stage. Preferentially locates between the peripheral microtubules of the axoneme and the ciliary membrane.</text>
</comment>
<dbReference type="EMBL" id="AY032666">
    <property type="protein sequence ID" value="AAK56502.1"/>
    <property type="molecule type" value="mRNA"/>
</dbReference>
<dbReference type="EMBL" id="BC118523">
    <property type="protein sequence ID" value="AAI18524.1"/>
    <property type="molecule type" value="mRNA"/>
</dbReference>
<dbReference type="CCDS" id="CCDS29577.1"/>
<dbReference type="RefSeq" id="NP_598450.1">
    <property type="nucleotide sequence ID" value="NM_133689.1"/>
</dbReference>
<dbReference type="RefSeq" id="XP_006527365.1">
    <property type="nucleotide sequence ID" value="XM_006527302.3"/>
</dbReference>
<dbReference type="RefSeq" id="XP_017173770.1">
    <property type="nucleotide sequence ID" value="XM_017318281.1"/>
</dbReference>
<dbReference type="RefSeq" id="XP_017173771.1">
    <property type="nucleotide sequence ID" value="XM_017318282.1"/>
</dbReference>
<dbReference type="PDB" id="8IYJ">
    <property type="method" value="EM"/>
    <property type="resolution" value="3.50 A"/>
    <property type="chains" value="X4/X5=1-427"/>
</dbReference>
<dbReference type="PDBsum" id="8IYJ"/>
<dbReference type="EMDB" id="EMD-35823"/>
<dbReference type="SMR" id="Q148A4"/>
<dbReference type="BioGRID" id="212419">
    <property type="interactions" value="1"/>
</dbReference>
<dbReference type="FunCoup" id="Q148A4">
    <property type="interactions" value="95"/>
</dbReference>
<dbReference type="STRING" id="10090.ENSMUSP00000158578"/>
<dbReference type="GlyGen" id="Q148A4">
    <property type="glycosylation" value="1 site"/>
</dbReference>
<dbReference type="iPTMnet" id="Q148A4"/>
<dbReference type="PhosphoSitePlus" id="Q148A4"/>
<dbReference type="PaxDb" id="10090-ENSMUSP00000035684"/>
<dbReference type="ProteomicsDB" id="291728"/>
<dbReference type="GeneID" id="67752"/>
<dbReference type="KEGG" id="mmu:67752"/>
<dbReference type="UCSC" id="uc008gps.1">
    <property type="organism name" value="mouse"/>
</dbReference>
<dbReference type="AGR" id="MGI:1915002"/>
<dbReference type="CTD" id="220004"/>
<dbReference type="MGI" id="MGI:1915002">
    <property type="gene designation" value="Saxo4"/>
</dbReference>
<dbReference type="eggNOG" id="ENOG502QR8X">
    <property type="taxonomic scope" value="Eukaryota"/>
</dbReference>
<dbReference type="InParanoid" id="Q148A4"/>
<dbReference type="OrthoDB" id="9980630at2759"/>
<dbReference type="PhylomeDB" id="Q148A4"/>
<dbReference type="TreeFam" id="TF328734"/>
<dbReference type="BioGRID-ORCS" id="67752">
    <property type="hits" value="2 hits in 76 CRISPR screens"/>
</dbReference>
<dbReference type="ChiTaRS" id="Ppp1r32">
    <property type="organism name" value="mouse"/>
</dbReference>
<dbReference type="PRO" id="PR:Q148A4"/>
<dbReference type="Proteomes" id="UP000000589">
    <property type="component" value="Unplaced"/>
</dbReference>
<dbReference type="RNAct" id="Q148A4">
    <property type="molecule type" value="protein"/>
</dbReference>
<dbReference type="GO" id="GO:0160111">
    <property type="term" value="C:axonemal A tubule inner sheath"/>
    <property type="evidence" value="ECO:0000314"/>
    <property type="project" value="MGI"/>
</dbReference>
<dbReference type="GO" id="GO:0005929">
    <property type="term" value="C:cilium"/>
    <property type="evidence" value="ECO:0000250"/>
    <property type="project" value="UniProtKB"/>
</dbReference>
<dbReference type="GO" id="GO:0005737">
    <property type="term" value="C:cytoplasm"/>
    <property type="evidence" value="ECO:0000250"/>
    <property type="project" value="UniProtKB"/>
</dbReference>
<dbReference type="GO" id="GO:0036126">
    <property type="term" value="C:sperm flagellum"/>
    <property type="evidence" value="ECO:0000314"/>
    <property type="project" value="UniProtKB"/>
</dbReference>
<dbReference type="GO" id="GO:0019902">
    <property type="term" value="F:phosphatase binding"/>
    <property type="evidence" value="ECO:0000250"/>
    <property type="project" value="UniProtKB"/>
</dbReference>
<dbReference type="GO" id="GO:0030317">
    <property type="term" value="P:flagellated sperm motility"/>
    <property type="evidence" value="ECO:0000314"/>
    <property type="project" value="UniProtKB"/>
</dbReference>
<dbReference type="InterPro" id="IPR031410">
    <property type="entry name" value="SAXO4"/>
</dbReference>
<dbReference type="PANTHER" id="PTHR34349">
    <property type="entry name" value="PROTEIN PHOSPHATASE 1 REGULATORY SUBUNIT 32"/>
    <property type="match status" value="1"/>
</dbReference>
<dbReference type="PANTHER" id="PTHR34349:SF1">
    <property type="entry name" value="PROTEIN PHOSPHATASE 1 REGULATORY SUBUNIT 32"/>
    <property type="match status" value="1"/>
</dbReference>
<dbReference type="Pfam" id="PF15691">
    <property type="entry name" value="PPP1R32"/>
    <property type="match status" value="1"/>
</dbReference>
<name>SAXO4_MOUSE</name>
<accession>Q148A4</accession>
<accession>Q91XJ2</accession>
<evidence type="ECO:0000250" key="1">
    <source>
        <dbReference type="UniProtKB" id="Q66HR9"/>
    </source>
</evidence>
<evidence type="ECO:0000250" key="2">
    <source>
        <dbReference type="UniProtKB" id="Q7Z5V6"/>
    </source>
</evidence>
<evidence type="ECO:0000256" key="3">
    <source>
        <dbReference type="SAM" id="MobiDB-lite"/>
    </source>
</evidence>
<evidence type="ECO:0000269" key="4">
    <source>
    </source>
</evidence>
<evidence type="ECO:0000305" key="5"/>
<evidence type="ECO:0000312" key="6">
    <source>
        <dbReference type="MGI" id="MGI:1915002"/>
    </source>
</evidence>
<evidence type="ECO:0007744" key="7">
    <source>
        <dbReference type="PDB" id="8IYJ"/>
    </source>
</evidence>
<feature type="chain" id="PRO_0000274378" description="Stabilizer of axonemal microtubules 4">
    <location>
        <begin position="1"/>
        <end position="427"/>
    </location>
</feature>
<feature type="region of interest" description="Disordered" evidence="3">
    <location>
        <begin position="82"/>
        <end position="105"/>
    </location>
</feature>
<feature type="region of interest" description="Disordered" evidence="3">
    <location>
        <begin position="273"/>
        <end position="298"/>
    </location>
</feature>
<feature type="region of interest" description="Disordered" evidence="3">
    <location>
        <begin position="314"/>
        <end position="335"/>
    </location>
</feature>
<feature type="compositionally biased region" description="Polar residues" evidence="3">
    <location>
        <begin position="287"/>
        <end position="298"/>
    </location>
</feature>
<feature type="compositionally biased region" description="Polar residues" evidence="3">
    <location>
        <begin position="321"/>
        <end position="332"/>
    </location>
</feature>
<feature type="sequence conflict" description="In Ref. 1; AAK56502." evidence="5" ref="1">
    <original>P</original>
    <variation>S</variation>
    <location>
        <position position="286"/>
    </location>
</feature>
<proteinExistence type="evidence at protein level"/>
<protein>
    <recommendedName>
        <fullName evidence="2">Stabilizer of axonemal microtubules 4</fullName>
    </recommendedName>
    <alternativeName>
        <fullName evidence="6">Protein phosphatase 1 regulatory subunit 32</fullName>
    </alternativeName>
</protein>
<keyword id="KW-0002">3D-structure</keyword>
<keyword id="KW-0966">Cell projection</keyword>
<keyword id="KW-0969">Cilium</keyword>
<keyword id="KW-0963">Cytoplasm</keyword>
<keyword id="KW-0206">Cytoskeleton</keyword>
<keyword id="KW-0282">Flagellum</keyword>
<keyword id="KW-1185">Reference proteome</keyword>